<keyword id="KW-0963">Cytoplasm</keyword>
<keyword id="KW-0539">Nucleus</keyword>
<keyword id="KW-0560">Oxidoreductase</keyword>
<keyword id="KW-1185">Reference proteome</keyword>
<gene>
    <name type="primary">mxr1</name>
    <name type="ORF">SPAC29E6.05c</name>
    <name type="ORF">SPAC30.09c</name>
</gene>
<sequence>MQIAIIAAGCFWGVQEVYLRKFIPAAAILKTSVGYTGGITADPTYKEVCTNTTNHAEALKIEFDEKLTSYDKIIEFFFAMHDPTTSNQQGNDIGTQYRSAIFTTNPEQATIAKRVMNEVQAKHYPNKKIVTQILPAGKWWDAEDYHQLYLEKNPDGYRCSSHFLRWNVFE</sequence>
<accession>Q09859</accession>
<accession>Q9P7U9</accession>
<name>MSRA_SCHPO</name>
<proteinExistence type="inferred from homology"/>
<protein>
    <recommendedName>
        <fullName>Probable peptide methionine sulfoxide reductase</fullName>
        <shortName>Protein-methionine-S-oxide reductase</shortName>
        <ecNumber>1.8.4.11</ecNumber>
    </recommendedName>
    <alternativeName>
        <fullName>Peptide-methionine (S)-S-oxide reductase</fullName>
        <shortName>Peptide Met(O) reductase</shortName>
    </alternativeName>
</protein>
<feature type="chain" id="PRO_0000138631" description="Probable peptide methionine sulfoxide reductase">
    <location>
        <begin position="1"/>
        <end position="170"/>
    </location>
</feature>
<dbReference type="EC" id="1.8.4.11"/>
<dbReference type="EMBL" id="Z66525">
    <property type="protein sequence ID" value="CAA91427.1"/>
    <property type="status" value="ALT_SEQ"/>
    <property type="molecule type" value="Genomic_DNA"/>
</dbReference>
<dbReference type="EMBL" id="CU329670">
    <property type="protein sequence ID" value="CAB66468.1"/>
    <property type="molecule type" value="Genomic_DNA"/>
</dbReference>
<dbReference type="PIR" id="T38506">
    <property type="entry name" value="S62511"/>
</dbReference>
<dbReference type="PIR" id="T50215">
    <property type="entry name" value="T50215"/>
</dbReference>
<dbReference type="RefSeq" id="NP_594563.1">
    <property type="nucleotide sequence ID" value="NM_001019992.2"/>
</dbReference>
<dbReference type="SMR" id="Q09859"/>
<dbReference type="BioGRID" id="278656">
    <property type="interactions" value="5"/>
</dbReference>
<dbReference type="FunCoup" id="Q09859">
    <property type="interactions" value="522"/>
</dbReference>
<dbReference type="STRING" id="284812.Q09859"/>
<dbReference type="PaxDb" id="4896-SPAC29E6.05c.1"/>
<dbReference type="EnsemblFungi" id="SPAC29E6.05c.1">
    <property type="protein sequence ID" value="SPAC29E6.05c.1:pep"/>
    <property type="gene ID" value="SPAC29E6.05c"/>
</dbReference>
<dbReference type="GeneID" id="2542181"/>
<dbReference type="KEGG" id="spo:2542181"/>
<dbReference type="PomBase" id="SPAC29E6.05c">
    <property type="gene designation" value="mxr1"/>
</dbReference>
<dbReference type="VEuPathDB" id="FungiDB:SPAC29E6.05c"/>
<dbReference type="eggNOG" id="KOG1635">
    <property type="taxonomic scope" value="Eukaryota"/>
</dbReference>
<dbReference type="HOGENOM" id="CLU_031040_10_2_1"/>
<dbReference type="InParanoid" id="Q09859"/>
<dbReference type="OMA" id="LFWESHD"/>
<dbReference type="PhylomeDB" id="Q09859"/>
<dbReference type="PRO" id="PR:Q09859"/>
<dbReference type="Proteomes" id="UP000002485">
    <property type="component" value="Chromosome I"/>
</dbReference>
<dbReference type="GO" id="GO:0005737">
    <property type="term" value="C:cytoplasm"/>
    <property type="evidence" value="ECO:0000318"/>
    <property type="project" value="GO_Central"/>
</dbReference>
<dbReference type="GO" id="GO:0005829">
    <property type="term" value="C:cytosol"/>
    <property type="evidence" value="ECO:0007005"/>
    <property type="project" value="PomBase"/>
</dbReference>
<dbReference type="GO" id="GO:0005634">
    <property type="term" value="C:nucleus"/>
    <property type="evidence" value="ECO:0007005"/>
    <property type="project" value="PomBase"/>
</dbReference>
<dbReference type="GO" id="GO:0036456">
    <property type="term" value="F:L-methionine-(S)-S-oxide reductase activity"/>
    <property type="evidence" value="ECO:0000315"/>
    <property type="project" value="PomBase"/>
</dbReference>
<dbReference type="GO" id="GO:0008113">
    <property type="term" value="F:peptide-methionine (S)-S-oxide reductase activity"/>
    <property type="evidence" value="ECO:0000318"/>
    <property type="project" value="GO_Central"/>
</dbReference>
<dbReference type="GO" id="GO:0034599">
    <property type="term" value="P:cellular response to oxidative stress"/>
    <property type="evidence" value="ECO:0000315"/>
    <property type="project" value="PomBase"/>
</dbReference>
<dbReference type="GO" id="GO:1990355">
    <property type="term" value="P:L-methionine salvage from methionine sulphoxide"/>
    <property type="evidence" value="ECO:0000315"/>
    <property type="project" value="PomBase"/>
</dbReference>
<dbReference type="GO" id="GO:0030091">
    <property type="term" value="P:protein repair"/>
    <property type="evidence" value="ECO:0000255"/>
    <property type="project" value="PomBase"/>
</dbReference>
<dbReference type="FunFam" id="3.30.1060.10:FF:000006">
    <property type="entry name" value="Peptide methionine sulfoxide reductase"/>
    <property type="match status" value="1"/>
</dbReference>
<dbReference type="Gene3D" id="3.30.1060.10">
    <property type="entry name" value="Peptide methionine sulphoxide reductase MsrA"/>
    <property type="match status" value="1"/>
</dbReference>
<dbReference type="HAMAP" id="MF_01401">
    <property type="entry name" value="MsrA"/>
    <property type="match status" value="1"/>
</dbReference>
<dbReference type="InterPro" id="IPR002569">
    <property type="entry name" value="Met_Sox_Rdtase_MsrA_dom"/>
</dbReference>
<dbReference type="InterPro" id="IPR036509">
    <property type="entry name" value="Met_Sox_Rdtase_MsrA_sf"/>
</dbReference>
<dbReference type="NCBIfam" id="TIGR00401">
    <property type="entry name" value="msrA"/>
    <property type="match status" value="1"/>
</dbReference>
<dbReference type="PANTHER" id="PTHR43774">
    <property type="entry name" value="PEPTIDE METHIONINE SULFOXIDE REDUCTASE"/>
    <property type="match status" value="1"/>
</dbReference>
<dbReference type="PANTHER" id="PTHR43774:SF1">
    <property type="entry name" value="PEPTIDE METHIONINE SULFOXIDE REDUCTASE MSRA 2"/>
    <property type="match status" value="1"/>
</dbReference>
<dbReference type="Pfam" id="PF01625">
    <property type="entry name" value="PMSR"/>
    <property type="match status" value="1"/>
</dbReference>
<dbReference type="SUPFAM" id="SSF55068">
    <property type="entry name" value="Peptide methionine sulfoxide reductase"/>
    <property type="match status" value="1"/>
</dbReference>
<reference key="1">
    <citation type="journal article" date="2002" name="Nature">
        <title>The genome sequence of Schizosaccharomyces pombe.</title>
        <authorList>
            <person name="Wood V."/>
            <person name="Gwilliam R."/>
            <person name="Rajandream M.A."/>
            <person name="Lyne M.H."/>
            <person name="Lyne R."/>
            <person name="Stewart A."/>
            <person name="Sgouros J.G."/>
            <person name="Peat N."/>
            <person name="Hayles J."/>
            <person name="Baker S.G."/>
            <person name="Basham D."/>
            <person name="Bowman S."/>
            <person name="Brooks K."/>
            <person name="Brown D."/>
            <person name="Brown S."/>
            <person name="Chillingworth T."/>
            <person name="Churcher C.M."/>
            <person name="Collins M."/>
            <person name="Connor R."/>
            <person name="Cronin A."/>
            <person name="Davis P."/>
            <person name="Feltwell T."/>
            <person name="Fraser A."/>
            <person name="Gentles S."/>
            <person name="Goble A."/>
            <person name="Hamlin N."/>
            <person name="Harris D.E."/>
            <person name="Hidalgo J."/>
            <person name="Hodgson G."/>
            <person name="Holroyd S."/>
            <person name="Hornsby T."/>
            <person name="Howarth S."/>
            <person name="Huckle E.J."/>
            <person name="Hunt S."/>
            <person name="Jagels K."/>
            <person name="James K.D."/>
            <person name="Jones L."/>
            <person name="Jones M."/>
            <person name="Leather S."/>
            <person name="McDonald S."/>
            <person name="McLean J."/>
            <person name="Mooney P."/>
            <person name="Moule S."/>
            <person name="Mungall K.L."/>
            <person name="Murphy L.D."/>
            <person name="Niblett D."/>
            <person name="Odell C."/>
            <person name="Oliver K."/>
            <person name="O'Neil S."/>
            <person name="Pearson D."/>
            <person name="Quail M.A."/>
            <person name="Rabbinowitsch E."/>
            <person name="Rutherford K.M."/>
            <person name="Rutter S."/>
            <person name="Saunders D."/>
            <person name="Seeger K."/>
            <person name="Sharp S."/>
            <person name="Skelton J."/>
            <person name="Simmonds M.N."/>
            <person name="Squares R."/>
            <person name="Squares S."/>
            <person name="Stevens K."/>
            <person name="Taylor K."/>
            <person name="Taylor R.G."/>
            <person name="Tivey A."/>
            <person name="Walsh S.V."/>
            <person name="Warren T."/>
            <person name="Whitehead S."/>
            <person name="Woodward J.R."/>
            <person name="Volckaert G."/>
            <person name="Aert R."/>
            <person name="Robben J."/>
            <person name="Grymonprez B."/>
            <person name="Weltjens I."/>
            <person name="Vanstreels E."/>
            <person name="Rieger M."/>
            <person name="Schaefer M."/>
            <person name="Mueller-Auer S."/>
            <person name="Gabel C."/>
            <person name="Fuchs M."/>
            <person name="Duesterhoeft A."/>
            <person name="Fritzc C."/>
            <person name="Holzer E."/>
            <person name="Moestl D."/>
            <person name="Hilbert H."/>
            <person name="Borzym K."/>
            <person name="Langer I."/>
            <person name="Beck A."/>
            <person name="Lehrach H."/>
            <person name="Reinhardt R."/>
            <person name="Pohl T.M."/>
            <person name="Eger P."/>
            <person name="Zimmermann W."/>
            <person name="Wedler H."/>
            <person name="Wambutt R."/>
            <person name="Purnelle B."/>
            <person name="Goffeau A."/>
            <person name="Cadieu E."/>
            <person name="Dreano S."/>
            <person name="Gloux S."/>
            <person name="Lelaure V."/>
            <person name="Mottier S."/>
            <person name="Galibert F."/>
            <person name="Aves S.J."/>
            <person name="Xiang Z."/>
            <person name="Hunt C."/>
            <person name="Moore K."/>
            <person name="Hurst S.M."/>
            <person name="Lucas M."/>
            <person name="Rochet M."/>
            <person name="Gaillardin C."/>
            <person name="Tallada V.A."/>
            <person name="Garzon A."/>
            <person name="Thode G."/>
            <person name="Daga R.R."/>
            <person name="Cruzado L."/>
            <person name="Jimenez J."/>
            <person name="Sanchez M."/>
            <person name="del Rey F."/>
            <person name="Benito J."/>
            <person name="Dominguez A."/>
            <person name="Revuelta J.L."/>
            <person name="Moreno S."/>
            <person name="Armstrong J."/>
            <person name="Forsburg S.L."/>
            <person name="Cerutti L."/>
            <person name="Lowe T."/>
            <person name="McCombie W.R."/>
            <person name="Paulsen I."/>
            <person name="Potashkin J."/>
            <person name="Shpakovski G.V."/>
            <person name="Ussery D."/>
            <person name="Barrell B.G."/>
            <person name="Nurse P."/>
        </authorList>
    </citation>
    <scope>NUCLEOTIDE SEQUENCE [LARGE SCALE GENOMIC DNA]</scope>
    <source>
        <strain>972 / ATCC 24843</strain>
    </source>
</reference>
<reference key="2">
    <citation type="journal article" date="2006" name="Nat. Biotechnol.">
        <title>ORFeome cloning and global analysis of protein localization in the fission yeast Schizosaccharomyces pombe.</title>
        <authorList>
            <person name="Matsuyama A."/>
            <person name="Arai R."/>
            <person name="Yashiroda Y."/>
            <person name="Shirai A."/>
            <person name="Kamata A."/>
            <person name="Sekido S."/>
            <person name="Kobayashi Y."/>
            <person name="Hashimoto A."/>
            <person name="Hamamoto M."/>
            <person name="Hiraoka Y."/>
            <person name="Horinouchi S."/>
            <person name="Yoshida M."/>
        </authorList>
    </citation>
    <scope>SUBCELLULAR LOCATION [LARGE SCALE ANALYSIS]</scope>
</reference>
<organism>
    <name type="scientific">Schizosaccharomyces pombe (strain 972 / ATCC 24843)</name>
    <name type="common">Fission yeast</name>
    <dbReference type="NCBI Taxonomy" id="284812"/>
    <lineage>
        <taxon>Eukaryota</taxon>
        <taxon>Fungi</taxon>
        <taxon>Dikarya</taxon>
        <taxon>Ascomycota</taxon>
        <taxon>Taphrinomycotina</taxon>
        <taxon>Schizosaccharomycetes</taxon>
        <taxon>Schizosaccharomycetales</taxon>
        <taxon>Schizosaccharomycetaceae</taxon>
        <taxon>Schizosaccharomyces</taxon>
    </lineage>
</organism>
<comment type="function">
    <text evidence="1">Has an important function as a repair enzyme for proteins that have been inactivated by oxidation. Catalyzes the reversible oxidation-reduction of methionine sulfoxide in proteins to methionine (By similarity).</text>
</comment>
<comment type="catalytic activity">
    <reaction>
        <text>L-methionyl-[protein] + [thioredoxin]-disulfide + H2O = L-methionyl-(S)-S-oxide-[protein] + [thioredoxin]-dithiol</text>
        <dbReference type="Rhea" id="RHEA:14217"/>
        <dbReference type="Rhea" id="RHEA-COMP:10698"/>
        <dbReference type="Rhea" id="RHEA-COMP:10700"/>
        <dbReference type="Rhea" id="RHEA-COMP:12313"/>
        <dbReference type="Rhea" id="RHEA-COMP:12315"/>
        <dbReference type="ChEBI" id="CHEBI:15377"/>
        <dbReference type="ChEBI" id="CHEBI:16044"/>
        <dbReference type="ChEBI" id="CHEBI:29950"/>
        <dbReference type="ChEBI" id="CHEBI:44120"/>
        <dbReference type="ChEBI" id="CHEBI:50058"/>
        <dbReference type="EC" id="1.8.4.11"/>
    </reaction>
</comment>
<comment type="catalytic activity">
    <reaction>
        <text>[thioredoxin]-disulfide + L-methionine + H2O = L-methionine (S)-S-oxide + [thioredoxin]-dithiol</text>
        <dbReference type="Rhea" id="RHEA:19993"/>
        <dbReference type="Rhea" id="RHEA-COMP:10698"/>
        <dbReference type="Rhea" id="RHEA-COMP:10700"/>
        <dbReference type="ChEBI" id="CHEBI:15377"/>
        <dbReference type="ChEBI" id="CHEBI:29950"/>
        <dbReference type="ChEBI" id="CHEBI:50058"/>
        <dbReference type="ChEBI" id="CHEBI:57844"/>
        <dbReference type="ChEBI" id="CHEBI:58772"/>
        <dbReference type="EC" id="1.8.4.11"/>
    </reaction>
</comment>
<comment type="subcellular location">
    <subcellularLocation>
        <location evidence="2">Cytoplasm</location>
    </subcellularLocation>
    <subcellularLocation>
        <location evidence="2">Nucleus</location>
    </subcellularLocation>
</comment>
<comment type="similarity">
    <text evidence="3">Belongs to the MsrA Met sulfoxide reductase family.</text>
</comment>
<evidence type="ECO:0000250" key="1"/>
<evidence type="ECO:0000269" key="2">
    <source>
    </source>
</evidence>
<evidence type="ECO:0000305" key="3"/>